<name>YYBP_BACSU</name>
<feature type="signal peptide" evidence="1">
    <location>
        <begin position="1"/>
        <end position="18"/>
    </location>
</feature>
<feature type="chain" id="PRO_0000013747" description="Uncharacterized lipoprotein YybP">
    <location>
        <begin position="19"/>
        <end position="148"/>
    </location>
</feature>
<feature type="lipid moiety-binding region" description="N-palmitoyl cysteine" evidence="1">
    <location>
        <position position="19"/>
    </location>
</feature>
<feature type="lipid moiety-binding region" description="S-diacylglycerol cysteine" evidence="1">
    <location>
        <position position="19"/>
    </location>
</feature>
<dbReference type="EMBL" id="D26185">
    <property type="protein sequence ID" value="BAA05187.1"/>
    <property type="molecule type" value="Genomic_DNA"/>
</dbReference>
<dbReference type="EMBL" id="AL009126">
    <property type="protein sequence ID" value="CAB16093.1"/>
    <property type="molecule type" value="Genomic_DNA"/>
</dbReference>
<dbReference type="PIR" id="S65981">
    <property type="entry name" value="S65981"/>
</dbReference>
<dbReference type="RefSeq" id="NP_391936.1">
    <property type="nucleotide sequence ID" value="NC_000964.3"/>
</dbReference>
<dbReference type="RefSeq" id="WP_003244214.1">
    <property type="nucleotide sequence ID" value="NZ_OZ025638.1"/>
</dbReference>
<dbReference type="SMR" id="P37488"/>
<dbReference type="FunCoup" id="P37488">
    <property type="interactions" value="79"/>
</dbReference>
<dbReference type="STRING" id="224308.BSU40560"/>
<dbReference type="PaxDb" id="224308-BSU40560"/>
<dbReference type="EnsemblBacteria" id="CAB16093">
    <property type="protein sequence ID" value="CAB16093"/>
    <property type="gene ID" value="BSU_40560"/>
</dbReference>
<dbReference type="GeneID" id="937851"/>
<dbReference type="KEGG" id="bsu:BSU40560"/>
<dbReference type="PATRIC" id="fig|224308.179.peg.4392"/>
<dbReference type="eggNOG" id="ENOG5030R8G">
    <property type="taxonomic scope" value="Bacteria"/>
</dbReference>
<dbReference type="InParanoid" id="P37488"/>
<dbReference type="OrthoDB" id="2607309at2"/>
<dbReference type="BioCyc" id="BSUB:BSU40560-MONOMER"/>
<dbReference type="Proteomes" id="UP000001570">
    <property type="component" value="Chromosome"/>
</dbReference>
<dbReference type="GO" id="GO:0005886">
    <property type="term" value="C:plasma membrane"/>
    <property type="evidence" value="ECO:0007669"/>
    <property type="project" value="UniProtKB-SubCell"/>
</dbReference>
<dbReference type="InterPro" id="IPR045956">
    <property type="entry name" value="DUF6376"/>
</dbReference>
<dbReference type="Pfam" id="PF19903">
    <property type="entry name" value="DUF6376"/>
    <property type="match status" value="1"/>
</dbReference>
<dbReference type="PROSITE" id="PS51257">
    <property type="entry name" value="PROKAR_LIPOPROTEIN"/>
    <property type="match status" value="1"/>
</dbReference>
<keyword id="KW-1003">Cell membrane</keyword>
<keyword id="KW-0449">Lipoprotein</keyword>
<keyword id="KW-0472">Membrane</keyword>
<keyword id="KW-0564">Palmitate</keyword>
<keyword id="KW-1185">Reference proteome</keyword>
<keyword id="KW-0732">Signal</keyword>
<organism>
    <name type="scientific">Bacillus subtilis (strain 168)</name>
    <dbReference type="NCBI Taxonomy" id="224308"/>
    <lineage>
        <taxon>Bacteria</taxon>
        <taxon>Bacillati</taxon>
        <taxon>Bacillota</taxon>
        <taxon>Bacilli</taxon>
        <taxon>Bacillales</taxon>
        <taxon>Bacillaceae</taxon>
        <taxon>Bacillus</taxon>
    </lineage>
</organism>
<comment type="subcellular location">
    <subcellularLocation>
        <location evidence="1">Cell membrane</location>
        <topology evidence="1">Lipid-anchor</topology>
    </subcellularLocation>
</comment>
<proteinExistence type="inferred from homology"/>
<gene>
    <name type="primary">yybP</name>
    <name type="ordered locus">BSU40560</name>
</gene>
<accession>P37488</accession>
<reference key="1">
    <citation type="journal article" date="1994" name="DNA Res.">
        <title>Systematic sequencing of the 180 kilobase region of the Bacillus subtilis chromosome containing the replication origin.</title>
        <authorList>
            <person name="Ogasawara N."/>
            <person name="Nakai S."/>
            <person name="Yoshikawa H."/>
        </authorList>
    </citation>
    <scope>NUCLEOTIDE SEQUENCE [GENOMIC DNA]</scope>
    <source>
        <strain>168</strain>
    </source>
</reference>
<reference key="2">
    <citation type="journal article" date="1997" name="Nature">
        <title>The complete genome sequence of the Gram-positive bacterium Bacillus subtilis.</title>
        <authorList>
            <person name="Kunst F."/>
            <person name="Ogasawara N."/>
            <person name="Moszer I."/>
            <person name="Albertini A.M."/>
            <person name="Alloni G."/>
            <person name="Azevedo V."/>
            <person name="Bertero M.G."/>
            <person name="Bessieres P."/>
            <person name="Bolotin A."/>
            <person name="Borchert S."/>
            <person name="Borriss R."/>
            <person name="Boursier L."/>
            <person name="Brans A."/>
            <person name="Braun M."/>
            <person name="Brignell S.C."/>
            <person name="Bron S."/>
            <person name="Brouillet S."/>
            <person name="Bruschi C.V."/>
            <person name="Caldwell B."/>
            <person name="Capuano V."/>
            <person name="Carter N.M."/>
            <person name="Choi S.-K."/>
            <person name="Codani J.-J."/>
            <person name="Connerton I.F."/>
            <person name="Cummings N.J."/>
            <person name="Daniel R.A."/>
            <person name="Denizot F."/>
            <person name="Devine K.M."/>
            <person name="Duesterhoeft A."/>
            <person name="Ehrlich S.D."/>
            <person name="Emmerson P.T."/>
            <person name="Entian K.-D."/>
            <person name="Errington J."/>
            <person name="Fabret C."/>
            <person name="Ferrari E."/>
            <person name="Foulger D."/>
            <person name="Fritz C."/>
            <person name="Fujita M."/>
            <person name="Fujita Y."/>
            <person name="Fuma S."/>
            <person name="Galizzi A."/>
            <person name="Galleron N."/>
            <person name="Ghim S.-Y."/>
            <person name="Glaser P."/>
            <person name="Goffeau A."/>
            <person name="Golightly E.J."/>
            <person name="Grandi G."/>
            <person name="Guiseppi G."/>
            <person name="Guy B.J."/>
            <person name="Haga K."/>
            <person name="Haiech J."/>
            <person name="Harwood C.R."/>
            <person name="Henaut A."/>
            <person name="Hilbert H."/>
            <person name="Holsappel S."/>
            <person name="Hosono S."/>
            <person name="Hullo M.-F."/>
            <person name="Itaya M."/>
            <person name="Jones L.-M."/>
            <person name="Joris B."/>
            <person name="Karamata D."/>
            <person name="Kasahara Y."/>
            <person name="Klaerr-Blanchard M."/>
            <person name="Klein C."/>
            <person name="Kobayashi Y."/>
            <person name="Koetter P."/>
            <person name="Koningstein G."/>
            <person name="Krogh S."/>
            <person name="Kumano M."/>
            <person name="Kurita K."/>
            <person name="Lapidus A."/>
            <person name="Lardinois S."/>
            <person name="Lauber J."/>
            <person name="Lazarevic V."/>
            <person name="Lee S.-M."/>
            <person name="Levine A."/>
            <person name="Liu H."/>
            <person name="Masuda S."/>
            <person name="Mauel C."/>
            <person name="Medigue C."/>
            <person name="Medina N."/>
            <person name="Mellado R.P."/>
            <person name="Mizuno M."/>
            <person name="Moestl D."/>
            <person name="Nakai S."/>
            <person name="Noback M."/>
            <person name="Noone D."/>
            <person name="O'Reilly M."/>
            <person name="Ogawa K."/>
            <person name="Ogiwara A."/>
            <person name="Oudega B."/>
            <person name="Park S.-H."/>
            <person name="Parro V."/>
            <person name="Pohl T.M."/>
            <person name="Portetelle D."/>
            <person name="Porwollik S."/>
            <person name="Prescott A.M."/>
            <person name="Presecan E."/>
            <person name="Pujic P."/>
            <person name="Purnelle B."/>
            <person name="Rapoport G."/>
            <person name="Rey M."/>
            <person name="Reynolds S."/>
            <person name="Rieger M."/>
            <person name="Rivolta C."/>
            <person name="Rocha E."/>
            <person name="Roche B."/>
            <person name="Rose M."/>
            <person name="Sadaie Y."/>
            <person name="Sato T."/>
            <person name="Scanlan E."/>
            <person name="Schleich S."/>
            <person name="Schroeter R."/>
            <person name="Scoffone F."/>
            <person name="Sekiguchi J."/>
            <person name="Sekowska A."/>
            <person name="Seror S.J."/>
            <person name="Serror P."/>
            <person name="Shin B.-S."/>
            <person name="Soldo B."/>
            <person name="Sorokin A."/>
            <person name="Tacconi E."/>
            <person name="Takagi T."/>
            <person name="Takahashi H."/>
            <person name="Takemaru K."/>
            <person name="Takeuchi M."/>
            <person name="Tamakoshi A."/>
            <person name="Tanaka T."/>
            <person name="Terpstra P."/>
            <person name="Tognoni A."/>
            <person name="Tosato V."/>
            <person name="Uchiyama S."/>
            <person name="Vandenbol M."/>
            <person name="Vannier F."/>
            <person name="Vassarotti A."/>
            <person name="Viari A."/>
            <person name="Wambutt R."/>
            <person name="Wedler E."/>
            <person name="Wedler H."/>
            <person name="Weitzenegger T."/>
            <person name="Winters P."/>
            <person name="Wipat A."/>
            <person name="Yamamoto H."/>
            <person name="Yamane K."/>
            <person name="Yasumoto K."/>
            <person name="Yata K."/>
            <person name="Yoshida K."/>
            <person name="Yoshikawa H.-F."/>
            <person name="Zumstein E."/>
            <person name="Yoshikawa H."/>
            <person name="Danchin A."/>
        </authorList>
    </citation>
    <scope>NUCLEOTIDE SEQUENCE [LARGE SCALE GENOMIC DNA]</scope>
    <source>
        <strain>168</strain>
    </source>
</reference>
<sequence length="148" mass="15968">MKIILTVLAGVGLLSAGGCGMLDQVNDGLNYTSEAAGYVEKVKTFAEEAPELAEKAVNDTEAKEKLEAQLESIQKAAADFNELTPPDAAAEIHRTIQEHNETLQKSAEDVLKQAEEGKVSLKELEQSDLVQNAKQITDVMGQIEKLGE</sequence>
<protein>
    <recommendedName>
        <fullName>Uncharacterized lipoprotein YybP</fullName>
    </recommendedName>
</protein>
<evidence type="ECO:0000255" key="1">
    <source>
        <dbReference type="PROSITE-ProRule" id="PRU00303"/>
    </source>
</evidence>